<name>DCUP_TRIV2</name>
<reference key="1">
    <citation type="journal article" date="2014" name="Stand. Genomic Sci.">
        <title>Complete genome sequence of Anabaena variabilis ATCC 29413.</title>
        <authorList>
            <person name="Thiel T."/>
            <person name="Pratte B.S."/>
            <person name="Zhong J."/>
            <person name="Goodwin L."/>
            <person name="Copeland A."/>
            <person name="Lucas S."/>
            <person name="Han C."/>
            <person name="Pitluck S."/>
            <person name="Land M.L."/>
            <person name="Kyrpides N.C."/>
            <person name="Woyke T."/>
        </authorList>
    </citation>
    <scope>NUCLEOTIDE SEQUENCE [LARGE SCALE GENOMIC DNA]</scope>
    <source>
        <strain>ATCC 29413 / PCC 7937</strain>
    </source>
</reference>
<proteinExistence type="inferred from homology"/>
<organism>
    <name type="scientific">Trichormus variabilis (strain ATCC 29413 / PCC 7937)</name>
    <name type="common">Anabaena variabilis</name>
    <dbReference type="NCBI Taxonomy" id="240292"/>
    <lineage>
        <taxon>Bacteria</taxon>
        <taxon>Bacillati</taxon>
        <taxon>Cyanobacteriota</taxon>
        <taxon>Cyanophyceae</taxon>
        <taxon>Nostocales</taxon>
        <taxon>Nostocaceae</taxon>
        <taxon>Trichormus</taxon>
    </lineage>
</organism>
<keyword id="KW-0963">Cytoplasm</keyword>
<keyword id="KW-0210">Decarboxylase</keyword>
<keyword id="KW-0456">Lyase</keyword>
<keyword id="KW-0627">Porphyrin biosynthesis</keyword>
<dbReference type="EC" id="4.1.1.37" evidence="1"/>
<dbReference type="EMBL" id="CP000117">
    <property type="protein sequence ID" value="ABA21410.1"/>
    <property type="molecule type" value="Genomic_DNA"/>
</dbReference>
<dbReference type="SMR" id="Q3MC76"/>
<dbReference type="STRING" id="240292.Ava_1788"/>
<dbReference type="KEGG" id="ava:Ava_1788"/>
<dbReference type="eggNOG" id="COG0407">
    <property type="taxonomic scope" value="Bacteria"/>
</dbReference>
<dbReference type="HOGENOM" id="CLU_040933_0_2_3"/>
<dbReference type="UniPathway" id="UPA00251">
    <property type="reaction ID" value="UER00321"/>
</dbReference>
<dbReference type="Proteomes" id="UP000002533">
    <property type="component" value="Chromosome"/>
</dbReference>
<dbReference type="GO" id="GO:0005737">
    <property type="term" value="C:cytoplasm"/>
    <property type="evidence" value="ECO:0007669"/>
    <property type="project" value="UniProtKB-SubCell"/>
</dbReference>
<dbReference type="GO" id="GO:0004853">
    <property type="term" value="F:uroporphyrinogen decarboxylase activity"/>
    <property type="evidence" value="ECO:0007669"/>
    <property type="project" value="UniProtKB-UniRule"/>
</dbReference>
<dbReference type="GO" id="GO:0006782">
    <property type="term" value="P:protoporphyrinogen IX biosynthetic process"/>
    <property type="evidence" value="ECO:0007669"/>
    <property type="project" value="UniProtKB-UniRule"/>
</dbReference>
<dbReference type="CDD" id="cd00717">
    <property type="entry name" value="URO-D"/>
    <property type="match status" value="1"/>
</dbReference>
<dbReference type="FunFam" id="3.20.20.210:FF:000006">
    <property type="entry name" value="Uroporphyrinogen decarboxylase"/>
    <property type="match status" value="1"/>
</dbReference>
<dbReference type="Gene3D" id="3.20.20.210">
    <property type="match status" value="1"/>
</dbReference>
<dbReference type="HAMAP" id="MF_00218">
    <property type="entry name" value="URO_D"/>
    <property type="match status" value="1"/>
</dbReference>
<dbReference type="InterPro" id="IPR038071">
    <property type="entry name" value="UROD/MetE-like_sf"/>
</dbReference>
<dbReference type="InterPro" id="IPR006361">
    <property type="entry name" value="Uroporphyrinogen_deCO2ase_HemE"/>
</dbReference>
<dbReference type="InterPro" id="IPR000257">
    <property type="entry name" value="Uroporphyrinogen_deCOase"/>
</dbReference>
<dbReference type="NCBIfam" id="TIGR01464">
    <property type="entry name" value="hemE"/>
    <property type="match status" value="1"/>
</dbReference>
<dbReference type="PANTHER" id="PTHR21091">
    <property type="entry name" value="METHYLTETRAHYDROFOLATE:HOMOCYSTEINE METHYLTRANSFERASE RELATED"/>
    <property type="match status" value="1"/>
</dbReference>
<dbReference type="PANTHER" id="PTHR21091:SF169">
    <property type="entry name" value="UROPORPHYRINOGEN DECARBOXYLASE"/>
    <property type="match status" value="1"/>
</dbReference>
<dbReference type="Pfam" id="PF01208">
    <property type="entry name" value="URO-D"/>
    <property type="match status" value="1"/>
</dbReference>
<dbReference type="SUPFAM" id="SSF51726">
    <property type="entry name" value="UROD/MetE-like"/>
    <property type="match status" value="1"/>
</dbReference>
<dbReference type="PROSITE" id="PS00906">
    <property type="entry name" value="UROD_1"/>
    <property type="match status" value="1"/>
</dbReference>
<dbReference type="PROSITE" id="PS00907">
    <property type="entry name" value="UROD_2"/>
    <property type="match status" value="1"/>
</dbReference>
<sequence>MGVTSTAPHLLRAARGEIVDRPPVWMMRQAGRYMKAYRDLREKYPSFRDRSEIPEVAIEVSLQPWKAFQPDGVILFSDIVTPLPGLGIEMDIAEGKGPIIHAPIRTQAQIEQLRPLEPEAALPFIKTILQALRQEVGHQSTVLGFVGAPWTLAAYAVEGKGSKTYSIIKNLAFSEPAILHQLLTKLADAIAIYARYQIDSGAQVVQMFDSWAGQLSPQDYDTFALPYQQRVFQQIKQTHPDTPLILLVSGSAGVLERMGQSGADIVTVDWTVDMADARARLGKQMKVQGNLDPGVLYASKQFIRDRIIDTVRKAGNWGHILNLGHGVLPDTPEENVAFFFETAKQLNVLV</sequence>
<gene>
    <name evidence="1" type="primary">hemE</name>
    <name type="ordered locus">Ava_1788</name>
</gene>
<comment type="function">
    <text evidence="1">Catalyzes the decarboxylation of four acetate groups of uroporphyrinogen-III to yield coproporphyrinogen-III.</text>
</comment>
<comment type="catalytic activity">
    <reaction evidence="1">
        <text>uroporphyrinogen III + 4 H(+) = coproporphyrinogen III + 4 CO2</text>
        <dbReference type="Rhea" id="RHEA:19865"/>
        <dbReference type="ChEBI" id="CHEBI:15378"/>
        <dbReference type="ChEBI" id="CHEBI:16526"/>
        <dbReference type="ChEBI" id="CHEBI:57308"/>
        <dbReference type="ChEBI" id="CHEBI:57309"/>
        <dbReference type="EC" id="4.1.1.37"/>
    </reaction>
</comment>
<comment type="pathway">
    <text evidence="1">Porphyrin-containing compound metabolism; protoporphyrin-IX biosynthesis; coproporphyrinogen-III from 5-aminolevulinate: step 4/4.</text>
</comment>
<comment type="subunit">
    <text evidence="1">Homodimer.</text>
</comment>
<comment type="subcellular location">
    <subcellularLocation>
        <location evidence="1">Cytoplasm</location>
    </subcellularLocation>
</comment>
<comment type="similarity">
    <text evidence="1">Belongs to the uroporphyrinogen decarboxylase family.</text>
</comment>
<accession>Q3MC76</accession>
<protein>
    <recommendedName>
        <fullName evidence="1">Uroporphyrinogen decarboxylase</fullName>
        <shortName evidence="1">UPD</shortName>
        <shortName evidence="1">URO-D</shortName>
        <ecNumber evidence="1">4.1.1.37</ecNumber>
    </recommendedName>
</protein>
<evidence type="ECO:0000255" key="1">
    <source>
        <dbReference type="HAMAP-Rule" id="MF_00218"/>
    </source>
</evidence>
<feature type="chain" id="PRO_1000023870" description="Uroporphyrinogen decarboxylase">
    <location>
        <begin position="1"/>
        <end position="350"/>
    </location>
</feature>
<feature type="binding site" evidence="1">
    <location>
        <begin position="28"/>
        <end position="32"/>
    </location>
    <ligand>
        <name>substrate</name>
    </ligand>
</feature>
<feature type="binding site" evidence="1">
    <location>
        <position position="78"/>
    </location>
    <ligand>
        <name>substrate</name>
    </ligand>
</feature>
<feature type="binding site" evidence="1">
    <location>
        <position position="155"/>
    </location>
    <ligand>
        <name>substrate</name>
    </ligand>
</feature>
<feature type="binding site" evidence="1">
    <location>
        <position position="210"/>
    </location>
    <ligand>
        <name>substrate</name>
    </ligand>
</feature>
<feature type="binding site" evidence="1">
    <location>
        <position position="325"/>
    </location>
    <ligand>
        <name>substrate</name>
    </ligand>
</feature>
<feature type="site" description="Transition state stabilizer" evidence="1">
    <location>
        <position position="78"/>
    </location>
</feature>